<protein>
    <recommendedName>
        <fullName evidence="1">dCTP deaminase</fullName>
        <ecNumber evidence="1">3.5.4.13</ecNumber>
    </recommendedName>
    <alternativeName>
        <fullName evidence="1">Deoxycytidine triphosphate deaminase</fullName>
    </alternativeName>
</protein>
<proteinExistence type="inferred from homology"/>
<dbReference type="EC" id="3.5.4.13" evidence="1"/>
<dbReference type="EMBL" id="BA000021">
    <property type="protein sequence ID" value="BAC24683.1"/>
    <property type="molecule type" value="Genomic_DNA"/>
</dbReference>
<dbReference type="SMR" id="Q8D218"/>
<dbReference type="STRING" id="36870.gene:10369046"/>
<dbReference type="KEGG" id="wbr:dcd"/>
<dbReference type="eggNOG" id="COG0717">
    <property type="taxonomic scope" value="Bacteria"/>
</dbReference>
<dbReference type="HOGENOM" id="CLU_087476_2_0_6"/>
<dbReference type="OrthoDB" id="9780956at2"/>
<dbReference type="UniPathway" id="UPA00610">
    <property type="reaction ID" value="UER00665"/>
</dbReference>
<dbReference type="Proteomes" id="UP000000562">
    <property type="component" value="Chromosome"/>
</dbReference>
<dbReference type="GO" id="GO:0008829">
    <property type="term" value="F:dCTP deaminase activity"/>
    <property type="evidence" value="ECO:0007669"/>
    <property type="project" value="UniProtKB-UniRule"/>
</dbReference>
<dbReference type="GO" id="GO:0000166">
    <property type="term" value="F:nucleotide binding"/>
    <property type="evidence" value="ECO:0007669"/>
    <property type="project" value="UniProtKB-KW"/>
</dbReference>
<dbReference type="GO" id="GO:0006226">
    <property type="term" value="P:dUMP biosynthetic process"/>
    <property type="evidence" value="ECO:0007669"/>
    <property type="project" value="UniProtKB-UniPathway"/>
</dbReference>
<dbReference type="GO" id="GO:0006229">
    <property type="term" value="P:dUTP biosynthetic process"/>
    <property type="evidence" value="ECO:0007669"/>
    <property type="project" value="UniProtKB-UniRule"/>
</dbReference>
<dbReference type="GO" id="GO:0015949">
    <property type="term" value="P:nucleobase-containing small molecule interconversion"/>
    <property type="evidence" value="ECO:0007669"/>
    <property type="project" value="TreeGrafter"/>
</dbReference>
<dbReference type="CDD" id="cd07557">
    <property type="entry name" value="trimeric_dUTPase"/>
    <property type="match status" value="1"/>
</dbReference>
<dbReference type="Gene3D" id="2.70.40.10">
    <property type="match status" value="1"/>
</dbReference>
<dbReference type="HAMAP" id="MF_00146">
    <property type="entry name" value="dCTP_deaminase"/>
    <property type="match status" value="1"/>
</dbReference>
<dbReference type="InterPro" id="IPR011962">
    <property type="entry name" value="dCTP_deaminase"/>
</dbReference>
<dbReference type="InterPro" id="IPR036157">
    <property type="entry name" value="dUTPase-like_sf"/>
</dbReference>
<dbReference type="InterPro" id="IPR033704">
    <property type="entry name" value="dUTPase_trimeric"/>
</dbReference>
<dbReference type="NCBIfam" id="TIGR02274">
    <property type="entry name" value="dCTP_deam"/>
    <property type="match status" value="1"/>
</dbReference>
<dbReference type="PANTHER" id="PTHR42680">
    <property type="entry name" value="DCTP DEAMINASE"/>
    <property type="match status" value="1"/>
</dbReference>
<dbReference type="PANTHER" id="PTHR42680:SF3">
    <property type="entry name" value="DCTP DEAMINASE"/>
    <property type="match status" value="1"/>
</dbReference>
<dbReference type="Pfam" id="PF22769">
    <property type="entry name" value="DCD"/>
    <property type="match status" value="1"/>
</dbReference>
<dbReference type="SUPFAM" id="SSF51283">
    <property type="entry name" value="dUTPase-like"/>
    <property type="match status" value="1"/>
</dbReference>
<accession>Q8D218</accession>
<gene>
    <name evidence="1" type="primary">dcd</name>
    <name type="ordered locus">WIGBR5370</name>
</gene>
<sequence length="196" mass="22571">MRLCDRDIEIWLKKNKLIITPRPSKDRINGATVDLKLWNKFRIFESYNAAYIDFDLISSLKNNNSNSWNYNMTNEIKISEKEKFFLHPGELVLALTLESITIPDNLIGWLDGRSSLARFGLMVHATSHRIDPGWSGNIVLEFYNSGKLPILLRPNMIIGSISFELLTNSAIRPYNKKKNAKYLNQIDTVIKINNLT</sequence>
<name>DCD_WIGBR</name>
<comment type="function">
    <text evidence="1">Catalyzes the deamination of dCTP to dUTP.</text>
</comment>
<comment type="catalytic activity">
    <reaction evidence="1">
        <text>dCTP + H2O + H(+) = dUTP + NH4(+)</text>
        <dbReference type="Rhea" id="RHEA:22680"/>
        <dbReference type="ChEBI" id="CHEBI:15377"/>
        <dbReference type="ChEBI" id="CHEBI:15378"/>
        <dbReference type="ChEBI" id="CHEBI:28938"/>
        <dbReference type="ChEBI" id="CHEBI:61481"/>
        <dbReference type="ChEBI" id="CHEBI:61555"/>
        <dbReference type="EC" id="3.5.4.13"/>
    </reaction>
</comment>
<comment type="pathway">
    <text evidence="1">Pyrimidine metabolism; dUMP biosynthesis; dUMP from dCTP (dUTP route): step 1/2.</text>
</comment>
<comment type="subunit">
    <text evidence="1">Homotrimer.</text>
</comment>
<comment type="similarity">
    <text evidence="1">Belongs to the dCTP deaminase family.</text>
</comment>
<organism>
    <name type="scientific">Wigglesworthia glossinidia brevipalpis</name>
    <dbReference type="NCBI Taxonomy" id="36870"/>
    <lineage>
        <taxon>Bacteria</taxon>
        <taxon>Pseudomonadati</taxon>
        <taxon>Pseudomonadota</taxon>
        <taxon>Gammaproteobacteria</taxon>
        <taxon>Enterobacterales</taxon>
        <taxon>Erwiniaceae</taxon>
        <taxon>Wigglesworthia</taxon>
    </lineage>
</organism>
<evidence type="ECO:0000255" key="1">
    <source>
        <dbReference type="HAMAP-Rule" id="MF_00146"/>
    </source>
</evidence>
<keyword id="KW-0378">Hydrolase</keyword>
<keyword id="KW-0546">Nucleotide metabolism</keyword>
<keyword id="KW-0547">Nucleotide-binding</keyword>
<keyword id="KW-1185">Reference proteome</keyword>
<feature type="chain" id="PRO_0000156018" description="dCTP deaminase">
    <location>
        <begin position="1"/>
        <end position="196"/>
    </location>
</feature>
<feature type="active site" description="Proton donor/acceptor" evidence="1">
    <location>
        <position position="141"/>
    </location>
</feature>
<feature type="binding site" evidence="1">
    <location>
        <begin position="113"/>
        <end position="118"/>
    </location>
    <ligand>
        <name>dCTP</name>
        <dbReference type="ChEBI" id="CHEBI:61481"/>
    </ligand>
</feature>
<feature type="binding site" evidence="1">
    <location>
        <position position="131"/>
    </location>
    <ligand>
        <name>dCTP</name>
        <dbReference type="ChEBI" id="CHEBI:61481"/>
    </ligand>
</feature>
<feature type="binding site" evidence="1">
    <location>
        <begin position="139"/>
        <end position="141"/>
    </location>
    <ligand>
        <name>dCTP</name>
        <dbReference type="ChEBI" id="CHEBI:61481"/>
    </ligand>
</feature>
<feature type="binding site" evidence="1">
    <location>
        <position position="174"/>
    </location>
    <ligand>
        <name>dCTP</name>
        <dbReference type="ChEBI" id="CHEBI:61481"/>
    </ligand>
</feature>
<feature type="binding site" evidence="1">
    <location>
        <position position="181"/>
    </location>
    <ligand>
        <name>dCTP</name>
        <dbReference type="ChEBI" id="CHEBI:61481"/>
    </ligand>
</feature>
<feature type="binding site" evidence="1">
    <location>
        <position position="185"/>
    </location>
    <ligand>
        <name>dCTP</name>
        <dbReference type="ChEBI" id="CHEBI:61481"/>
    </ligand>
</feature>
<reference key="1">
    <citation type="journal article" date="2002" name="Nat. Genet.">
        <title>Genome sequence of the endocellular obligate symbiont of tsetse flies, Wigglesworthia glossinidia.</title>
        <authorList>
            <person name="Akman L."/>
            <person name="Yamashita A."/>
            <person name="Watanabe H."/>
            <person name="Oshima K."/>
            <person name="Shiba T."/>
            <person name="Hattori M."/>
            <person name="Aksoy S."/>
        </authorList>
    </citation>
    <scope>NUCLEOTIDE SEQUENCE [LARGE SCALE GENOMIC DNA]</scope>
</reference>